<gene>
    <name evidence="1" type="primary">floA</name>
    <name type="ordered locus">Teth514_1573</name>
</gene>
<evidence type="ECO:0000255" key="1">
    <source>
        <dbReference type="HAMAP-Rule" id="MF_01562"/>
    </source>
</evidence>
<reference key="1">
    <citation type="submission" date="2008-01" db="EMBL/GenBank/DDBJ databases">
        <title>Complete sequence of Thermoanaerobacter sp. X514.</title>
        <authorList>
            <consortium name="US DOE Joint Genome Institute"/>
            <person name="Copeland A."/>
            <person name="Lucas S."/>
            <person name="Lapidus A."/>
            <person name="Barry K."/>
            <person name="Glavina del Rio T."/>
            <person name="Dalin E."/>
            <person name="Tice H."/>
            <person name="Pitluck S."/>
            <person name="Bruce D."/>
            <person name="Goodwin L."/>
            <person name="Saunders E."/>
            <person name="Brettin T."/>
            <person name="Detter J.C."/>
            <person name="Han C."/>
            <person name="Schmutz J."/>
            <person name="Larimer F."/>
            <person name="Land M."/>
            <person name="Hauser L."/>
            <person name="Kyrpides N."/>
            <person name="Kim E."/>
            <person name="Hemme C."/>
            <person name="Fields M.W."/>
            <person name="He Z."/>
            <person name="Zhou J."/>
            <person name="Richardson P."/>
        </authorList>
    </citation>
    <scope>NUCLEOTIDE SEQUENCE [LARGE SCALE GENOMIC DNA]</scope>
    <source>
        <strain>X514</strain>
    </source>
</reference>
<accession>B0K165</accession>
<keyword id="KW-1003">Cell membrane</keyword>
<keyword id="KW-0472">Membrane</keyword>
<keyword id="KW-0812">Transmembrane</keyword>
<keyword id="KW-1133">Transmembrane helix</keyword>
<dbReference type="EMBL" id="CP000923">
    <property type="protein sequence ID" value="ABY92860.1"/>
    <property type="molecule type" value="Genomic_DNA"/>
</dbReference>
<dbReference type="RefSeq" id="WP_009052352.1">
    <property type="nucleotide sequence ID" value="NC_010320.1"/>
</dbReference>
<dbReference type="SMR" id="B0K165"/>
<dbReference type="KEGG" id="tex:Teth514_1573"/>
<dbReference type="HOGENOM" id="CLU_836378_0_0_9"/>
<dbReference type="Proteomes" id="UP000002155">
    <property type="component" value="Chromosome"/>
</dbReference>
<dbReference type="GO" id="GO:0045121">
    <property type="term" value="C:membrane raft"/>
    <property type="evidence" value="ECO:0007669"/>
    <property type="project" value="UniProtKB-SubCell"/>
</dbReference>
<dbReference type="GO" id="GO:0005886">
    <property type="term" value="C:plasma membrane"/>
    <property type="evidence" value="ECO:0007669"/>
    <property type="project" value="UniProtKB-SubCell"/>
</dbReference>
<dbReference type="HAMAP" id="MF_01562">
    <property type="entry name" value="FloA"/>
    <property type="match status" value="1"/>
</dbReference>
<dbReference type="InterPro" id="IPR022853">
    <property type="entry name" value="FloA"/>
</dbReference>
<dbReference type="NCBIfam" id="NF010186">
    <property type="entry name" value="PRK13665.1"/>
    <property type="match status" value="1"/>
</dbReference>
<dbReference type="Pfam" id="PF12127">
    <property type="entry name" value="FloA"/>
    <property type="match status" value="1"/>
</dbReference>
<protein>
    <recommendedName>
        <fullName evidence="1">Flotillin-like protein FloA</fullName>
    </recommendedName>
</protein>
<feature type="chain" id="PRO_1000199717" description="Flotillin-like protein FloA">
    <location>
        <begin position="1"/>
        <end position="329"/>
    </location>
</feature>
<feature type="transmembrane region" description="Helical" evidence="1">
    <location>
        <begin position="5"/>
        <end position="25"/>
    </location>
</feature>
<feature type="transmembrane region" description="Helical" evidence="1">
    <location>
        <begin position="27"/>
        <end position="47"/>
    </location>
</feature>
<sequence length="329" mass="35763">MTEFIFLLVVIGLIFVFLSVILSFIPLGLWISALAAGVKIGIFTLVGMRLRRVPPDKIVKPLIKAIKAGQDVEINKLEAHYLAGGNVDKVIDALIAAQRANISLEFERAAAIDLAGRDVLHAVQMSVNPKVIETPVVAAVAKDGIEVKVKARVTVRANIDRLVGGAGEETIIARVGEGIVTTVGSSNSHKEVLENPDSISRTVLNKGLDAGTAFEILSIDIADVDVGRNIGARLQIDQAEADKRIAQAKAEERRAMAVAREQEMKAMVQEMRAKVVEAEAEVPKAMAEALRTGKIGVMDYYNMRNVIADTMMRESFSKLGQERQQEEKE</sequence>
<organism>
    <name type="scientific">Thermoanaerobacter sp. (strain X514)</name>
    <dbReference type="NCBI Taxonomy" id="399726"/>
    <lineage>
        <taxon>Bacteria</taxon>
        <taxon>Bacillati</taxon>
        <taxon>Bacillota</taxon>
        <taxon>Clostridia</taxon>
        <taxon>Thermoanaerobacterales</taxon>
        <taxon>Thermoanaerobacteraceae</taxon>
        <taxon>Thermoanaerobacter</taxon>
    </lineage>
</organism>
<name>FLOA_THEPX</name>
<proteinExistence type="inferred from homology"/>
<comment type="function">
    <text evidence="1">Found in functional membrane microdomains (FMM) that may be equivalent to eukaryotic membrane rafts. FMMs are highly dynamic and increase in number as cells age. Flotillins are thought to be important factors in membrane fluidity.</text>
</comment>
<comment type="subunit">
    <text evidence="1">Homooligomerizes.</text>
</comment>
<comment type="subcellular location">
    <subcellularLocation>
        <location evidence="1">Cell membrane</location>
        <topology evidence="1">Multi-pass membrane protein</topology>
    </subcellularLocation>
    <subcellularLocation>
        <location evidence="1">Membrane raft</location>
        <topology evidence="1">Multi-pass membrane protein</topology>
    </subcellularLocation>
</comment>
<comment type="similarity">
    <text evidence="1">Belongs to the flotillin-like FloA family.</text>
</comment>